<organism>
    <name type="scientific">Homo sapiens</name>
    <name type="common">Human</name>
    <dbReference type="NCBI Taxonomy" id="9606"/>
    <lineage>
        <taxon>Eukaryota</taxon>
        <taxon>Metazoa</taxon>
        <taxon>Chordata</taxon>
        <taxon>Craniata</taxon>
        <taxon>Vertebrata</taxon>
        <taxon>Euteleostomi</taxon>
        <taxon>Mammalia</taxon>
        <taxon>Eutheria</taxon>
        <taxon>Euarchontoglires</taxon>
        <taxon>Primates</taxon>
        <taxon>Haplorrhini</taxon>
        <taxon>Catarrhini</taxon>
        <taxon>Hominidae</taxon>
        <taxon>Homo</taxon>
    </lineage>
</organism>
<keyword id="KW-0002">3D-structure</keyword>
<keyword id="KW-0025">Alternative splicing</keyword>
<keyword id="KW-0225">Disease variant</keyword>
<keyword id="KW-0238">DNA-binding</keyword>
<keyword id="KW-0325">Glycoprotein</keyword>
<keyword id="KW-1017">Isopeptide bond</keyword>
<keyword id="KW-0479">Metal-binding</keyword>
<keyword id="KW-0488">Methylation</keyword>
<keyword id="KW-0539">Nucleus</keyword>
<keyword id="KW-0597">Phosphoprotein</keyword>
<keyword id="KW-1267">Proteomics identification</keyword>
<keyword id="KW-1185">Reference proteome</keyword>
<keyword id="KW-0677">Repeat</keyword>
<keyword id="KW-0804">Transcription</keyword>
<keyword id="KW-0805">Transcription regulation</keyword>
<keyword id="KW-0832">Ubl conjugation</keyword>
<keyword id="KW-0862">Zinc</keyword>
<keyword id="KW-0863">Zinc-finger</keyword>
<dbReference type="EMBL" id="AB058706">
    <property type="protein sequence ID" value="BAB47432.2"/>
    <property type="molecule type" value="mRNA"/>
</dbReference>
<dbReference type="EMBL" id="AL512593">
    <property type="status" value="NOT_ANNOTATED_CDS"/>
    <property type="molecule type" value="Genomic_DNA"/>
</dbReference>
<dbReference type="EMBL" id="AK027866">
    <property type="status" value="NOT_ANNOTATED_CDS"/>
    <property type="molecule type" value="mRNA"/>
</dbReference>
<dbReference type="EMBL" id="BC036884">
    <property type="protein sequence ID" value="AAH36884.1"/>
    <property type="status" value="ALT_INIT"/>
    <property type="molecule type" value="mRNA"/>
</dbReference>
<dbReference type="CCDS" id="CCDS35096.1">
    <molecule id="Q96JM2-1"/>
</dbReference>
<dbReference type="RefSeq" id="NP_067047.4">
    <molecule id="Q96JM2-1"/>
    <property type="nucleotide sequence ID" value="NM_021224.5"/>
</dbReference>
<dbReference type="RefSeq" id="XP_006717278.1">
    <molecule id="Q96JM2-3"/>
    <property type="nucleotide sequence ID" value="XM_006717215.5"/>
</dbReference>
<dbReference type="RefSeq" id="XP_006717279.1">
    <molecule id="Q96JM2-1"/>
    <property type="nucleotide sequence ID" value="XM_006717216.5"/>
</dbReference>
<dbReference type="RefSeq" id="XP_047279624.1">
    <molecule id="Q96JM2-3"/>
    <property type="nucleotide sequence ID" value="XM_047423668.1"/>
</dbReference>
<dbReference type="RefSeq" id="XP_047279625.1">
    <molecule id="Q96JM2-3"/>
    <property type="nucleotide sequence ID" value="XM_047423669.1"/>
</dbReference>
<dbReference type="RefSeq" id="XP_047279626.1">
    <molecule id="Q96JM2-3"/>
    <property type="nucleotide sequence ID" value="XM_047423670.1"/>
</dbReference>
<dbReference type="RefSeq" id="XP_047279627.1">
    <molecule id="Q96JM2-3"/>
    <property type="nucleotide sequence ID" value="XM_047423671.1"/>
</dbReference>
<dbReference type="RefSeq" id="XP_047279628.1">
    <molecule id="Q96JM2-1"/>
    <property type="nucleotide sequence ID" value="XM_047423672.1"/>
</dbReference>
<dbReference type="RefSeq" id="XP_047279629.1">
    <molecule id="Q96JM2-1"/>
    <property type="nucleotide sequence ID" value="XM_047423673.1"/>
</dbReference>
<dbReference type="RefSeq" id="XP_047279630.1">
    <molecule id="Q96JM2-1"/>
    <property type="nucleotide sequence ID" value="XM_047423674.1"/>
</dbReference>
<dbReference type="RefSeq" id="XP_047279631.1">
    <molecule id="Q96JM2-1"/>
    <property type="nucleotide sequence ID" value="XM_047423675.1"/>
</dbReference>
<dbReference type="RefSeq" id="XP_047279632.1">
    <molecule id="Q96JM2-1"/>
    <property type="nucleotide sequence ID" value="XM_047423676.1"/>
</dbReference>
<dbReference type="RefSeq" id="XP_047279633.1">
    <molecule id="Q96JM2-1"/>
    <property type="nucleotide sequence ID" value="XM_047423677.1"/>
</dbReference>
<dbReference type="RefSeq" id="XP_047279634.1">
    <molecule id="Q96JM2-1"/>
    <property type="nucleotide sequence ID" value="XM_047423678.1"/>
</dbReference>
<dbReference type="PDB" id="1X6F">
    <property type="method" value="NMR"/>
    <property type="chains" value="A=1874-1948"/>
</dbReference>
<dbReference type="PDBsum" id="1X6F"/>
<dbReference type="BMRB" id="Q96JM2"/>
<dbReference type="SMR" id="Q96JM2"/>
<dbReference type="BioGRID" id="121829">
    <property type="interactions" value="61"/>
</dbReference>
<dbReference type="DIP" id="DIP-39340N"/>
<dbReference type="ELM" id="Q96JM2"/>
<dbReference type="FunCoup" id="Q96JM2">
    <property type="interactions" value="2577"/>
</dbReference>
<dbReference type="IntAct" id="Q96JM2">
    <property type="interactions" value="34"/>
</dbReference>
<dbReference type="MINT" id="Q96JM2"/>
<dbReference type="STRING" id="9606.ENSP00000277225"/>
<dbReference type="GlyCosmos" id="Q96JM2">
    <property type="glycosylation" value="2 sites, No reported glycans"/>
</dbReference>
<dbReference type="GlyGen" id="Q96JM2">
    <property type="glycosylation" value="6 sites, 1 O-linked glycan (4 sites)"/>
</dbReference>
<dbReference type="iPTMnet" id="Q96JM2"/>
<dbReference type="PhosphoSitePlus" id="Q96JM2"/>
<dbReference type="BioMuta" id="ZNF462"/>
<dbReference type="DMDM" id="238054352"/>
<dbReference type="jPOST" id="Q96JM2"/>
<dbReference type="MassIVE" id="Q96JM2"/>
<dbReference type="PaxDb" id="9606-ENSP00000277225"/>
<dbReference type="PeptideAtlas" id="Q96JM2"/>
<dbReference type="ProteomicsDB" id="76981">
    <molecule id="Q96JM2-1"/>
</dbReference>
<dbReference type="ProteomicsDB" id="76982">
    <molecule id="Q96JM2-2"/>
</dbReference>
<dbReference type="ProteomicsDB" id="76983">
    <molecule id="Q96JM2-3"/>
</dbReference>
<dbReference type="Pumba" id="Q96JM2"/>
<dbReference type="Antibodypedia" id="14859">
    <property type="antibodies" value="66 antibodies from 19 providers"/>
</dbReference>
<dbReference type="DNASU" id="58499"/>
<dbReference type="Ensembl" id="ENST00000277225.10">
    <molecule id="Q96JM2-1"/>
    <property type="protein sequence ID" value="ENSP00000277225.5"/>
    <property type="gene ID" value="ENSG00000148143.13"/>
</dbReference>
<dbReference type="Ensembl" id="ENST00000441147.6">
    <molecule id="Q96JM2-2"/>
    <property type="protein sequence ID" value="ENSP00000397306.2"/>
    <property type="gene ID" value="ENSG00000148143.13"/>
</dbReference>
<dbReference type="GeneID" id="58499"/>
<dbReference type="KEGG" id="hsa:58499"/>
<dbReference type="MANE-Select" id="ENST00000277225.10">
    <property type="protein sequence ID" value="ENSP00000277225.5"/>
    <property type="RefSeq nucleotide sequence ID" value="NM_021224.6"/>
    <property type="RefSeq protein sequence ID" value="NP_067047.4"/>
</dbReference>
<dbReference type="UCSC" id="uc004bcz.4">
    <molecule id="Q96JM2-1"/>
    <property type="organism name" value="human"/>
</dbReference>
<dbReference type="AGR" id="HGNC:21684"/>
<dbReference type="CTD" id="58499"/>
<dbReference type="DisGeNET" id="58499"/>
<dbReference type="GeneCards" id="ZNF462"/>
<dbReference type="GeneReviews" id="ZNF462"/>
<dbReference type="HGNC" id="HGNC:21684">
    <property type="gene designation" value="ZNF462"/>
</dbReference>
<dbReference type="HPA" id="ENSG00000148143">
    <property type="expression patterns" value="Low tissue specificity"/>
</dbReference>
<dbReference type="MalaCards" id="ZNF462"/>
<dbReference type="MIM" id="617371">
    <property type="type" value="gene"/>
</dbReference>
<dbReference type="MIM" id="618619">
    <property type="type" value="phenotype"/>
</dbReference>
<dbReference type="neXtProt" id="NX_Q96JM2"/>
<dbReference type="OpenTargets" id="ENSG00000148143"/>
<dbReference type="Orphanet" id="502430">
    <property type="disease" value="Weiss-Kruszka Syndrome"/>
</dbReference>
<dbReference type="PharmGKB" id="PA134949139"/>
<dbReference type="VEuPathDB" id="HostDB:ENSG00000148143"/>
<dbReference type="eggNOG" id="KOG1721">
    <property type="taxonomic scope" value="Eukaryota"/>
</dbReference>
<dbReference type="GeneTree" id="ENSGT00940000156411"/>
<dbReference type="InParanoid" id="Q96JM2"/>
<dbReference type="OMA" id="CAFQSFS"/>
<dbReference type="OrthoDB" id="4737882at2759"/>
<dbReference type="PAN-GO" id="Q96JM2">
    <property type="GO annotations" value="2 GO annotations based on evolutionary models"/>
</dbReference>
<dbReference type="PhylomeDB" id="Q96JM2"/>
<dbReference type="TreeFam" id="TF325534"/>
<dbReference type="PathwayCommons" id="Q96JM2"/>
<dbReference type="SignaLink" id="Q96JM2"/>
<dbReference type="SIGNOR" id="Q96JM2"/>
<dbReference type="BioGRID-ORCS" id="58499">
    <property type="hits" value="21 hits in 1161 CRISPR screens"/>
</dbReference>
<dbReference type="ChiTaRS" id="ZNF462">
    <property type="organism name" value="human"/>
</dbReference>
<dbReference type="EvolutionaryTrace" id="Q96JM2"/>
<dbReference type="GenomeRNAi" id="58499"/>
<dbReference type="Pharos" id="Q96JM2">
    <property type="development level" value="Tbio"/>
</dbReference>
<dbReference type="PRO" id="PR:Q96JM2"/>
<dbReference type="Proteomes" id="UP000005640">
    <property type="component" value="Chromosome 9"/>
</dbReference>
<dbReference type="RNAct" id="Q96JM2">
    <property type="molecule type" value="protein"/>
</dbReference>
<dbReference type="Bgee" id="ENSG00000148143">
    <property type="expression patterns" value="Expressed in buccal mucosa cell and 192 other cell types or tissues"/>
</dbReference>
<dbReference type="ExpressionAtlas" id="Q96JM2">
    <property type="expression patterns" value="baseline and differential"/>
</dbReference>
<dbReference type="GO" id="GO:0005654">
    <property type="term" value="C:nucleoplasm"/>
    <property type="evidence" value="ECO:0000314"/>
    <property type="project" value="HPA"/>
</dbReference>
<dbReference type="GO" id="GO:0005634">
    <property type="term" value="C:nucleus"/>
    <property type="evidence" value="ECO:0000318"/>
    <property type="project" value="GO_Central"/>
</dbReference>
<dbReference type="GO" id="GO:0003677">
    <property type="term" value="F:DNA binding"/>
    <property type="evidence" value="ECO:0007669"/>
    <property type="project" value="UniProtKB-KW"/>
</dbReference>
<dbReference type="GO" id="GO:0008270">
    <property type="term" value="F:zinc ion binding"/>
    <property type="evidence" value="ECO:0007669"/>
    <property type="project" value="UniProtKB-KW"/>
</dbReference>
<dbReference type="GO" id="GO:0006325">
    <property type="term" value="P:chromatin organization"/>
    <property type="evidence" value="ECO:0007669"/>
    <property type="project" value="Ensembl"/>
</dbReference>
<dbReference type="GO" id="GO:0045944">
    <property type="term" value="P:positive regulation of transcription by RNA polymerase II"/>
    <property type="evidence" value="ECO:0000318"/>
    <property type="project" value="GO_Central"/>
</dbReference>
<dbReference type="FunFam" id="3.30.160.60:FF:000403">
    <property type="entry name" value="Putative zinc finger protein 462"/>
    <property type="match status" value="1"/>
</dbReference>
<dbReference type="FunFam" id="3.30.160.60:FF:000541">
    <property type="entry name" value="Zinc finger protein 462"/>
    <property type="match status" value="1"/>
</dbReference>
<dbReference type="FunFam" id="3.30.160.60:FF:000655">
    <property type="entry name" value="Zinc finger protein 462"/>
    <property type="match status" value="1"/>
</dbReference>
<dbReference type="FunFam" id="3.30.160.60:FF:000734">
    <property type="entry name" value="Zinc finger protein 462"/>
    <property type="match status" value="1"/>
</dbReference>
<dbReference type="FunFam" id="3.30.160.60:FF:001043">
    <property type="entry name" value="Zinc finger protein 462"/>
    <property type="match status" value="1"/>
</dbReference>
<dbReference type="FunFam" id="3.30.160.60:FF:001131">
    <property type="entry name" value="Zinc finger protein 462"/>
    <property type="match status" value="1"/>
</dbReference>
<dbReference type="FunFam" id="3.30.160.60:FF:000559">
    <property type="entry name" value="zinc finger protein 462 isoform X1"/>
    <property type="match status" value="1"/>
</dbReference>
<dbReference type="FunFam" id="3.30.160.60:FF:000613">
    <property type="entry name" value="zinc finger protein 462 isoform X1"/>
    <property type="match status" value="1"/>
</dbReference>
<dbReference type="Gene3D" id="3.30.160.60">
    <property type="entry name" value="Classic Zinc Finger"/>
    <property type="match status" value="9"/>
</dbReference>
<dbReference type="InterPro" id="IPR050688">
    <property type="entry name" value="Zinc_finger/UBP_domain"/>
</dbReference>
<dbReference type="InterPro" id="IPR036236">
    <property type="entry name" value="Znf_C2H2_sf"/>
</dbReference>
<dbReference type="InterPro" id="IPR013087">
    <property type="entry name" value="Znf_C2H2_type"/>
</dbReference>
<dbReference type="PANTHER" id="PTHR24403">
    <property type="entry name" value="ZINC FINGER PROTEIN"/>
    <property type="match status" value="1"/>
</dbReference>
<dbReference type="PANTHER" id="PTHR24403:SF58">
    <property type="entry name" value="ZINC FINGER PROTEIN 462"/>
    <property type="match status" value="1"/>
</dbReference>
<dbReference type="Pfam" id="PF23224">
    <property type="entry name" value="zf-C2H2_2nd_ZNF462"/>
    <property type="match status" value="1"/>
</dbReference>
<dbReference type="Pfam" id="PF23225">
    <property type="entry name" value="zf-C2H2_7th_ZNF462"/>
    <property type="match status" value="7"/>
</dbReference>
<dbReference type="Pfam" id="PF23223">
    <property type="entry name" value="zf-C2H2_ZNF462"/>
    <property type="match status" value="1"/>
</dbReference>
<dbReference type="Pfam" id="PF23075">
    <property type="entry name" value="zf-C2H2_ZNF462_11"/>
    <property type="match status" value="2"/>
</dbReference>
<dbReference type="Pfam" id="PF23077">
    <property type="entry name" value="zf-C2H2_ZNF462_1st"/>
    <property type="match status" value="1"/>
</dbReference>
<dbReference type="SMART" id="SM00355">
    <property type="entry name" value="ZnF_C2H2"/>
    <property type="match status" value="34"/>
</dbReference>
<dbReference type="SUPFAM" id="SSF57667">
    <property type="entry name" value="beta-beta-alpha zinc fingers"/>
    <property type="match status" value="3"/>
</dbReference>
<dbReference type="PROSITE" id="PS00028">
    <property type="entry name" value="ZINC_FINGER_C2H2_1"/>
    <property type="match status" value="8"/>
</dbReference>
<dbReference type="PROSITE" id="PS50157">
    <property type="entry name" value="ZINC_FINGER_C2H2_2"/>
    <property type="match status" value="9"/>
</dbReference>
<accession>Q96JM2</accession>
<accession>Q5T0T4</accession>
<accession>Q8N408</accession>
<sequence length="2506" mass="284688">MEVLQCDGCDFRAPSYEDLKAHIQDVHTAFLQPTDVAEDNVNELRCGSVNASNQTEVEFSSIKDEFAIAEDLSGQNATSLGTGGYYGHSPGYYGQHIAANPKPTNKFFQCKFCVRYFRSKNLLIEHTRKVHGAQAEGSSSGPPVPGSLNYNIMMHEGFGKVFSCQFCTYKSPRRARIIKHQKMYHKNNLKETTAPPPAPAPMPDPVVPPVSLQDPCKELPAEVVERSILESMVKPLTKSRGNFCCEWCSYQTPRRERWCDHMMKKHRSMVKILSSLRQQQEGTNLPDVPNKSAPSPTSNSTYLTMNAASREIPNTTVSNFRGSMGNSIMRPNSSASKFSPMSYPQMKPKSPHNSGLVNLTERSRYGMTDMTNSSADLETNSMLNDSSSDEELNEIDSENGLSAMDHQTSGLSAEQLMGSDGNKLLETKGIPFRRFMNRFQCPFCPFLTMHRRSISRHIENIHLSGKTAVYKCDECPFTCKSSLKLGAHKQCHTGTTSDWDAVNSQSESISSSLNEGVVSYESSSINGRKSGVMLDPLQQQQPPQPPPPPPPPPPSQPQPLQQPQPPQLQPPHQVPPQPQTQPPPTQQPQPPTQAAPLHPYKCTMCNYSTTTLKGLRVHQQHKHSFCDNLPKFEGQPSSLPLENETDSHPSSSNTVKKSQTSILGLSSKNNFVAKASRKLANDFPLDLSPVKKRTRIDEIASNLQSKINQTKQQEDAVINVEDDEEEEEDNEVEIEVELDREEEPTEPIIEVPTSFSAQQIWVRDTSEPQKEPNFRNITHDYNATNGAEIELTLSEDEEDYYGSSTNLKDHQVSNTALLNTQTPIYGTEHNSENTDFGDSGRLYYCKHCDFNNKSARSVSTHYQRMHPYIKFSFRYILDPNDHSAVYRCLECYIDYTNFEDLQQHYGEHHPEAMNVLNFDHSDLIYRCRFCSYTSPNVRSLMPHYQRMHPTVKINNAMIFSSYVVEQQEGLNTESQTLREILNSAPKNMATSTPVARGGGLPATFNKNTPKTFTPECENQKDPLVNTVVVYDCDVCSFASPNMHSVLVHYQKKHPEEKASYFRIQKTMRMVSVDRGSALSQLSFEVGAPMSPKMSNMGSPPPPQPPPPDLSTELYYCKHCSYSNRSVVGVLVHYQKRHPEIKVTAKYIRQAPPTAAMMRGVEGPQGSPRPPAPIQQLNRSSSERDGPPVENEMFFCQHCDYGNRTVKGVLIHYQKKHRDFKANADVIRQHTATIRSLCDRNQKKPASCVLVSPSNLERDKTKLRALKCRQCSYTSPYFYALRKHIKKDHPALKATVTSIMRWAFLDGLIEAGYHCEWCIYSHTEPNGLLLHYQRRHPEHYVDYTYMATKLWAGPDPSPPSLTMPAEAKTYRCRDCVFEAVSIWDITNHYQAFHPWAMNGDESVLLDIIKEKDAVEKPILSSEELAGPVNCENSIPTPFPEQEAECPEDARLSPEKSLQLASANPAISSTPYQCTVCQSEYNNLHGLLTHYGKKHPGMKVKAADFAQDIDINPGAVYKCRHCPYINTRIHGVLTHYQKRHPSIKVTAEDFVHDVEQSADISQNDVEETSRIFKQGYGAYRCKLCPYTHGTLEKLKIHYEKYHNQPEFDVFSQSPPKLPVPLEPEMTTEVSPSQVSITEEEVGEEPVSTSHFSTSHLVSHTVFRCQLCKYFCSTRKGIARHYRIKHNNVRAQPEGKNNLFKCALCAYTNPIRKGLAAHYQKRHDIDAYYTHCLAASRTISDKPNKVIIPSPPKDDSPQLSEELRRAVEKKKCSLCSFQSFSKKGIVSHYMKRHPGVFPKKQHASKLGGYFTAVYADEHEKPTLMEEEERGNFEKAEVEGEAQEIEWLPFRCIKCFKLSFSTAELLCMHYTDHHSRDLKRDFIILGNGPRLQNSTYQCKHCDSKLQSTAELTSHLNIHNEEFQKRAKRQERRKQLLSKQKYADGAFADFKQERPFGHLEEVPKIKERKVVGYKCKFCVEVHPTLRAICNHLRKHVQYGNVPAVSAAVKGLRSHERSHLALAMFTREDKYSCQYCSFVSAFRHNLDRHMQTHHGHHKPFRCKLCSFKSSYNSRLKTHILKAHAGEHAYKCSWCSFSTMTISQLKEHSLKVHGKALTLPRPRIVSLLSSHSHHSSQKATPAEEVEDSNDSSYSEPPDVQQQLNHYQSAALARNNSRVSPVPLSGAAAGTEQKTEAVLHCEFCEFSSGYIQSIRRHYRDKHGGKKLFKCKDCSFYTGFKSAFTMHVEAGHSAVPEEGPKDLRCPLCLYHTKYKRNMIDHIVLHREERVVPIEVCRSKLSKYLQGVVFRCDKCTFTCSSDESLQQHIEKHNELKPYKCQLCYYETKHTEELDSHLRDEHKVSRNFELVGRVNLDQLEQMKEKMESSSSDDEDKEEEMNSKAEDRELMRFSDHGAALNTEKRFPCEFCGRAFSQGSEWERHVLRHGMALNDTKQVSREEIHPKEIMENSVKMPSIEEKEDDEAIGIDFSLKNETVAICVVTADKSLLENAEAKKE</sequence>
<name>ZN462_HUMAN</name>
<evidence type="ECO:0000250" key="1">
    <source>
        <dbReference type="UniProtKB" id="B1AWL2"/>
    </source>
</evidence>
<evidence type="ECO:0000255" key="2">
    <source>
        <dbReference type="PROSITE-ProRule" id="PRU00042"/>
    </source>
</evidence>
<evidence type="ECO:0000256" key="3">
    <source>
        <dbReference type="SAM" id="MobiDB-lite"/>
    </source>
</evidence>
<evidence type="ECO:0000269" key="4">
    <source>
    </source>
</evidence>
<evidence type="ECO:0000269" key="5">
    <source>
    </source>
</evidence>
<evidence type="ECO:0000269" key="6">
    <source>
    </source>
</evidence>
<evidence type="ECO:0000269" key="7">
    <source>
    </source>
</evidence>
<evidence type="ECO:0000269" key="8">
    <source>
    </source>
</evidence>
<evidence type="ECO:0000269" key="9">
    <source>
    </source>
</evidence>
<evidence type="ECO:0000303" key="10">
    <source>
    </source>
</evidence>
<evidence type="ECO:0000303" key="11">
    <source>
    </source>
</evidence>
<evidence type="ECO:0000305" key="12"/>
<evidence type="ECO:0000312" key="13">
    <source>
        <dbReference type="HGNC" id="HGNC:21684"/>
    </source>
</evidence>
<evidence type="ECO:0007744" key="14">
    <source>
    </source>
</evidence>
<evidence type="ECO:0007744" key="15">
    <source>
    </source>
</evidence>
<evidence type="ECO:0007744" key="16">
    <source>
    </source>
</evidence>
<evidence type="ECO:0007744" key="17">
    <source>
    </source>
</evidence>
<evidence type="ECO:0007744" key="18">
    <source>
    </source>
</evidence>
<evidence type="ECO:0007744" key="19">
    <source>
    </source>
</evidence>
<evidence type="ECO:0007744" key="20">
    <source>
    </source>
</evidence>
<evidence type="ECO:0007744" key="21">
    <source>
    </source>
</evidence>
<evidence type="ECO:0007829" key="22">
    <source>
        <dbReference type="PDB" id="1X6F"/>
    </source>
</evidence>
<proteinExistence type="evidence at protein level"/>
<reference key="1">
    <citation type="journal article" date="2001" name="DNA Res.">
        <title>Prediction of the coding sequences of unidentified human genes. XX. The complete sequences of 100 new cDNA clones from brain which code for large proteins in vitro.</title>
        <authorList>
            <person name="Nagase T."/>
            <person name="Nakayama M."/>
            <person name="Nakajima D."/>
            <person name="Kikuno R."/>
            <person name="Ohara O."/>
        </authorList>
    </citation>
    <scope>NUCLEOTIDE SEQUENCE [LARGE SCALE MRNA] (ISOFORM 2)</scope>
    <source>
        <tissue>Brain</tissue>
    </source>
</reference>
<reference key="2">
    <citation type="journal article" date="2002" name="DNA Res.">
        <title>Construction of expression-ready cDNA clones for KIAA genes: manual curation of 330 KIAA cDNA clones.</title>
        <authorList>
            <person name="Nakajima D."/>
            <person name="Okazaki N."/>
            <person name="Yamakawa H."/>
            <person name="Kikuno R."/>
            <person name="Ohara O."/>
            <person name="Nagase T."/>
        </authorList>
    </citation>
    <scope>SEQUENCE REVISION</scope>
</reference>
<reference key="3">
    <citation type="journal article" date="2004" name="Nature">
        <title>DNA sequence and analysis of human chromosome 9.</title>
        <authorList>
            <person name="Humphray S.J."/>
            <person name="Oliver K."/>
            <person name="Hunt A.R."/>
            <person name="Plumb R.W."/>
            <person name="Loveland J.E."/>
            <person name="Howe K.L."/>
            <person name="Andrews T.D."/>
            <person name="Searle S."/>
            <person name="Hunt S.E."/>
            <person name="Scott C.E."/>
            <person name="Jones M.C."/>
            <person name="Ainscough R."/>
            <person name="Almeida J.P."/>
            <person name="Ambrose K.D."/>
            <person name="Ashwell R.I.S."/>
            <person name="Babbage A.K."/>
            <person name="Babbage S."/>
            <person name="Bagguley C.L."/>
            <person name="Bailey J."/>
            <person name="Banerjee R."/>
            <person name="Barker D.J."/>
            <person name="Barlow K.F."/>
            <person name="Bates K."/>
            <person name="Beasley H."/>
            <person name="Beasley O."/>
            <person name="Bird C.P."/>
            <person name="Bray-Allen S."/>
            <person name="Brown A.J."/>
            <person name="Brown J.Y."/>
            <person name="Burford D."/>
            <person name="Burrill W."/>
            <person name="Burton J."/>
            <person name="Carder C."/>
            <person name="Carter N.P."/>
            <person name="Chapman J.C."/>
            <person name="Chen Y."/>
            <person name="Clarke G."/>
            <person name="Clark S.Y."/>
            <person name="Clee C.M."/>
            <person name="Clegg S."/>
            <person name="Collier R.E."/>
            <person name="Corby N."/>
            <person name="Crosier M."/>
            <person name="Cummings A.T."/>
            <person name="Davies J."/>
            <person name="Dhami P."/>
            <person name="Dunn M."/>
            <person name="Dutta I."/>
            <person name="Dyer L.W."/>
            <person name="Earthrowl M.E."/>
            <person name="Faulkner L."/>
            <person name="Fleming C.J."/>
            <person name="Frankish A."/>
            <person name="Frankland J.A."/>
            <person name="French L."/>
            <person name="Fricker D.G."/>
            <person name="Garner P."/>
            <person name="Garnett J."/>
            <person name="Ghori J."/>
            <person name="Gilbert J.G.R."/>
            <person name="Glison C."/>
            <person name="Grafham D.V."/>
            <person name="Gribble S."/>
            <person name="Griffiths C."/>
            <person name="Griffiths-Jones S."/>
            <person name="Grocock R."/>
            <person name="Guy J."/>
            <person name="Hall R.E."/>
            <person name="Hammond S."/>
            <person name="Harley J.L."/>
            <person name="Harrison E.S.I."/>
            <person name="Hart E.A."/>
            <person name="Heath P.D."/>
            <person name="Henderson C.D."/>
            <person name="Hopkins B.L."/>
            <person name="Howard P.J."/>
            <person name="Howden P.J."/>
            <person name="Huckle E."/>
            <person name="Johnson C."/>
            <person name="Johnson D."/>
            <person name="Joy A.A."/>
            <person name="Kay M."/>
            <person name="Keenan S."/>
            <person name="Kershaw J.K."/>
            <person name="Kimberley A.M."/>
            <person name="King A."/>
            <person name="Knights A."/>
            <person name="Laird G.K."/>
            <person name="Langford C."/>
            <person name="Lawlor S."/>
            <person name="Leongamornlert D.A."/>
            <person name="Leversha M."/>
            <person name="Lloyd C."/>
            <person name="Lloyd D.M."/>
            <person name="Lovell J."/>
            <person name="Martin S."/>
            <person name="Mashreghi-Mohammadi M."/>
            <person name="Matthews L."/>
            <person name="McLaren S."/>
            <person name="McLay K.E."/>
            <person name="McMurray A."/>
            <person name="Milne S."/>
            <person name="Nickerson T."/>
            <person name="Nisbett J."/>
            <person name="Nordsiek G."/>
            <person name="Pearce A.V."/>
            <person name="Peck A.I."/>
            <person name="Porter K.M."/>
            <person name="Pandian R."/>
            <person name="Pelan S."/>
            <person name="Phillimore B."/>
            <person name="Povey S."/>
            <person name="Ramsey Y."/>
            <person name="Rand V."/>
            <person name="Scharfe M."/>
            <person name="Sehra H.K."/>
            <person name="Shownkeen R."/>
            <person name="Sims S.K."/>
            <person name="Skuce C.D."/>
            <person name="Smith M."/>
            <person name="Steward C.A."/>
            <person name="Swarbreck D."/>
            <person name="Sycamore N."/>
            <person name="Tester J."/>
            <person name="Thorpe A."/>
            <person name="Tracey A."/>
            <person name="Tromans A."/>
            <person name="Thomas D.W."/>
            <person name="Wall M."/>
            <person name="Wallis J.M."/>
            <person name="West A.P."/>
            <person name="Whitehead S.L."/>
            <person name="Willey D.L."/>
            <person name="Williams S.A."/>
            <person name="Wilming L."/>
            <person name="Wray P.W."/>
            <person name="Young L."/>
            <person name="Ashurst J.L."/>
            <person name="Coulson A."/>
            <person name="Blocker H."/>
            <person name="Durbin R.M."/>
            <person name="Sulston J.E."/>
            <person name="Hubbard T."/>
            <person name="Jackson M.J."/>
            <person name="Bentley D.R."/>
            <person name="Beck S."/>
            <person name="Rogers J."/>
            <person name="Dunham I."/>
        </authorList>
    </citation>
    <scope>NUCLEOTIDE SEQUENCE [LARGE SCALE GENOMIC DNA]</scope>
</reference>
<reference key="4">
    <citation type="journal article" date="2004" name="Nat. Genet.">
        <title>Complete sequencing and characterization of 21,243 full-length human cDNAs.</title>
        <authorList>
            <person name="Ota T."/>
            <person name="Suzuki Y."/>
            <person name="Nishikawa T."/>
            <person name="Otsuki T."/>
            <person name="Sugiyama T."/>
            <person name="Irie R."/>
            <person name="Wakamatsu A."/>
            <person name="Hayashi K."/>
            <person name="Sato H."/>
            <person name="Nagai K."/>
            <person name="Kimura K."/>
            <person name="Makita H."/>
            <person name="Sekine M."/>
            <person name="Obayashi M."/>
            <person name="Nishi T."/>
            <person name="Shibahara T."/>
            <person name="Tanaka T."/>
            <person name="Ishii S."/>
            <person name="Yamamoto J."/>
            <person name="Saito K."/>
            <person name="Kawai Y."/>
            <person name="Isono Y."/>
            <person name="Nakamura Y."/>
            <person name="Nagahari K."/>
            <person name="Murakami K."/>
            <person name="Yasuda T."/>
            <person name="Iwayanagi T."/>
            <person name="Wagatsuma M."/>
            <person name="Shiratori A."/>
            <person name="Sudo H."/>
            <person name="Hosoiri T."/>
            <person name="Kaku Y."/>
            <person name="Kodaira H."/>
            <person name="Kondo H."/>
            <person name="Sugawara M."/>
            <person name="Takahashi M."/>
            <person name="Kanda K."/>
            <person name="Yokoi T."/>
            <person name="Furuya T."/>
            <person name="Kikkawa E."/>
            <person name="Omura Y."/>
            <person name="Abe K."/>
            <person name="Kamihara K."/>
            <person name="Katsuta N."/>
            <person name="Sato K."/>
            <person name="Tanikawa M."/>
            <person name="Yamazaki M."/>
            <person name="Ninomiya K."/>
            <person name="Ishibashi T."/>
            <person name="Yamashita H."/>
            <person name="Murakawa K."/>
            <person name="Fujimori K."/>
            <person name="Tanai H."/>
            <person name="Kimata M."/>
            <person name="Watanabe M."/>
            <person name="Hiraoka S."/>
            <person name="Chiba Y."/>
            <person name="Ishida S."/>
            <person name="Ono Y."/>
            <person name="Takiguchi S."/>
            <person name="Watanabe S."/>
            <person name="Yosida M."/>
            <person name="Hotuta T."/>
            <person name="Kusano J."/>
            <person name="Kanehori K."/>
            <person name="Takahashi-Fujii A."/>
            <person name="Hara H."/>
            <person name="Tanase T.-O."/>
            <person name="Nomura Y."/>
            <person name="Togiya S."/>
            <person name="Komai F."/>
            <person name="Hara R."/>
            <person name="Takeuchi K."/>
            <person name="Arita M."/>
            <person name="Imose N."/>
            <person name="Musashino K."/>
            <person name="Yuuki H."/>
            <person name="Oshima A."/>
            <person name="Sasaki N."/>
            <person name="Aotsuka S."/>
            <person name="Yoshikawa Y."/>
            <person name="Matsunawa H."/>
            <person name="Ichihara T."/>
            <person name="Shiohata N."/>
            <person name="Sano S."/>
            <person name="Moriya S."/>
            <person name="Momiyama H."/>
            <person name="Satoh N."/>
            <person name="Takami S."/>
            <person name="Terashima Y."/>
            <person name="Suzuki O."/>
            <person name="Nakagawa S."/>
            <person name="Senoh A."/>
            <person name="Mizoguchi H."/>
            <person name="Goto Y."/>
            <person name="Shimizu F."/>
            <person name="Wakebe H."/>
            <person name="Hishigaki H."/>
            <person name="Watanabe T."/>
            <person name="Sugiyama A."/>
            <person name="Takemoto M."/>
            <person name="Kawakami B."/>
            <person name="Yamazaki M."/>
            <person name="Watanabe K."/>
            <person name="Kumagai A."/>
            <person name="Itakura S."/>
            <person name="Fukuzumi Y."/>
            <person name="Fujimori Y."/>
            <person name="Komiyama M."/>
            <person name="Tashiro H."/>
            <person name="Tanigami A."/>
            <person name="Fujiwara T."/>
            <person name="Ono T."/>
            <person name="Yamada K."/>
            <person name="Fujii Y."/>
            <person name="Ozaki K."/>
            <person name="Hirao M."/>
            <person name="Ohmori Y."/>
            <person name="Kawabata A."/>
            <person name="Hikiji T."/>
            <person name="Kobatake N."/>
            <person name="Inagaki H."/>
            <person name="Ikema Y."/>
            <person name="Okamoto S."/>
            <person name="Okitani R."/>
            <person name="Kawakami T."/>
            <person name="Noguchi S."/>
            <person name="Itoh T."/>
            <person name="Shigeta K."/>
            <person name="Senba T."/>
            <person name="Matsumura K."/>
            <person name="Nakajima Y."/>
            <person name="Mizuno T."/>
            <person name="Morinaga M."/>
            <person name="Sasaki M."/>
            <person name="Togashi T."/>
            <person name="Oyama M."/>
            <person name="Hata H."/>
            <person name="Watanabe M."/>
            <person name="Komatsu T."/>
            <person name="Mizushima-Sugano J."/>
            <person name="Satoh T."/>
            <person name="Shirai Y."/>
            <person name="Takahashi Y."/>
            <person name="Nakagawa K."/>
            <person name="Okumura K."/>
            <person name="Nagase T."/>
            <person name="Nomura N."/>
            <person name="Kikuchi H."/>
            <person name="Masuho Y."/>
            <person name="Yamashita R."/>
            <person name="Nakai K."/>
            <person name="Yada T."/>
            <person name="Nakamura Y."/>
            <person name="Ohara O."/>
            <person name="Isogai T."/>
            <person name="Sugano S."/>
        </authorList>
    </citation>
    <scope>NUCLEOTIDE SEQUENCE [LARGE SCALE MRNA] OF 1118-2506 (ISOFORM 3)</scope>
    <source>
        <tissue>Placenta</tissue>
    </source>
</reference>
<reference key="5">
    <citation type="journal article" date="2004" name="Genome Res.">
        <title>The status, quality, and expansion of the NIH full-length cDNA project: the Mammalian Gene Collection (MGC).</title>
        <authorList>
            <consortium name="The MGC Project Team"/>
        </authorList>
    </citation>
    <scope>NUCLEOTIDE SEQUENCE [LARGE SCALE MRNA] OF 1576-2506 (ISOFORM 1)</scope>
    <source>
        <tissue>Liver</tissue>
    </source>
</reference>
<reference key="6">
    <citation type="journal article" date="2009" name="Sci. Signal.">
        <title>Quantitative phosphoproteomic analysis of T cell receptor signaling reveals system-wide modulation of protein-protein interactions.</title>
        <authorList>
            <person name="Mayya V."/>
            <person name="Lundgren D.H."/>
            <person name="Hwang S.-I."/>
            <person name="Rezaul K."/>
            <person name="Wu L."/>
            <person name="Eng J.K."/>
            <person name="Rodionov V."/>
            <person name="Han D.K."/>
        </authorList>
    </citation>
    <scope>PHOSPHORYLATION [LARGE SCALE ANALYSIS] AT SER-688</scope>
    <scope>IDENTIFICATION BY MASS SPECTROMETRY [LARGE SCALE ANALYSIS]</scope>
    <source>
        <tissue>Leukemic T-cell</tissue>
    </source>
</reference>
<reference key="7">
    <citation type="journal article" date="2010" name="Exp. Cell Res.">
        <title>Involvement of ZFPIP/Zfp462 in chromatin integrity and survival of P19 pluripotent cells.</title>
        <authorList>
            <person name="Masse J."/>
            <person name="Laurent A."/>
            <person name="Nicol B."/>
            <person name="Guerrier D."/>
            <person name="Pellerin I."/>
            <person name="Deschamps S."/>
        </authorList>
    </citation>
    <scope>FUNCTION</scope>
    <scope>SUBCELLULAR LOCATION</scope>
</reference>
<reference key="8">
    <citation type="journal article" date="2011" name="Exp. Cell Res.">
        <title>ZFPIP/Zfp462 is involved in P19 cell pluripotency and in their neuronal fate.</title>
        <authorList>
            <person name="Masse J."/>
            <person name="Piquet-Pellorce C."/>
            <person name="Viet J."/>
            <person name="Guerrier D."/>
            <person name="Pellerin I."/>
            <person name="Deschamps S."/>
        </authorList>
    </citation>
    <scope>FUNCTION</scope>
    <scope>SUBCELLULAR LOCATION</scope>
</reference>
<reference key="9">
    <citation type="journal article" date="2011" name="Sci. Signal.">
        <title>System-wide temporal characterization of the proteome and phosphoproteome of human embryonic stem cell differentiation.</title>
        <authorList>
            <person name="Rigbolt K.T."/>
            <person name="Prokhorova T.A."/>
            <person name="Akimov V."/>
            <person name="Henningsen J."/>
            <person name="Johansen P.T."/>
            <person name="Kratchmarova I."/>
            <person name="Kassem M."/>
            <person name="Mann M."/>
            <person name="Olsen J.V."/>
            <person name="Blagoev B."/>
        </authorList>
    </citation>
    <scope>PHOSPHORYLATION [LARGE SCALE ANALYSIS] AT SER-350; SER-354; SER-688; SER-1090; SER-1166; SER-2172 AND SER-2177</scope>
    <scope>IDENTIFICATION BY MASS SPECTROMETRY [LARGE SCALE ANALYSIS]</scope>
</reference>
<reference key="10">
    <citation type="journal article" date="2012" name="Mol. Cell. Proteomics">
        <title>Discovery of O-GlcNAc-6-phosphate modified proteins in large-scale phosphoproteomics data.</title>
        <authorList>
            <person name="Hahne H."/>
            <person name="Kuster B."/>
        </authorList>
    </citation>
    <scope>GLYCOSYLATION AT SER-292 AND SER-309</scope>
    <scope>PHOSPHORYLATION AT SER-292 AND SER-309</scope>
    <source>
        <tissue>Embryonic stem cell</tissue>
    </source>
</reference>
<reference key="11">
    <citation type="journal article" date="2014" name="Mol. Cell. Proteomics">
        <title>Immunoaffinity enrichment and mass spectrometry analysis of protein methylation.</title>
        <authorList>
            <person name="Guo A."/>
            <person name="Gu H."/>
            <person name="Zhou J."/>
            <person name="Mulhern D."/>
            <person name="Wang Y."/>
            <person name="Lee K.A."/>
            <person name="Yang V."/>
            <person name="Aguiar M."/>
            <person name="Kornhauser J."/>
            <person name="Jia X."/>
            <person name="Ren J."/>
            <person name="Beausoleil S.A."/>
            <person name="Silva J.C."/>
            <person name="Vemulapalli V."/>
            <person name="Bedford M.T."/>
            <person name="Comb M.J."/>
        </authorList>
    </citation>
    <scope>METHYLATION [LARGE SCALE ANALYSIS] AT LYS-2004</scope>
    <scope>IDENTIFICATION BY MASS SPECTROMETRY [LARGE SCALE ANALYSIS]</scope>
    <source>
        <tissue>Colon carcinoma</tissue>
    </source>
</reference>
<reference key="12">
    <citation type="journal article" date="2014" name="Nat. Struct. Mol. Biol.">
        <title>Uncovering global SUMOylation signaling networks in a site-specific manner.</title>
        <authorList>
            <person name="Hendriks I.A."/>
            <person name="D'Souza R.C."/>
            <person name="Yang B."/>
            <person name="Verlaan-de Vries M."/>
            <person name="Mann M."/>
            <person name="Vertegaal A.C."/>
        </authorList>
    </citation>
    <scope>SUMOYLATION [LARGE SCALE ANALYSIS] AT LYS-20 AND LYS-1946</scope>
    <scope>IDENTIFICATION BY MASS SPECTROMETRY [LARGE SCALE ANALYSIS]</scope>
</reference>
<reference key="13">
    <citation type="journal article" date="2014" name="Proc. Natl. Acad. Sci. U.S.A.">
        <title>Mapping of SUMO sites and analysis of SUMOylation changes induced by external stimuli.</title>
        <authorList>
            <person name="Impens F."/>
            <person name="Radoshevich L."/>
            <person name="Cossart P."/>
            <person name="Ribet D."/>
        </authorList>
    </citation>
    <scope>SUMOYLATION [LARGE SCALE ANALYSIS] AT LYS-20</scope>
    <scope>IDENTIFICATION BY MASS SPECTROMETRY [LARGE SCALE ANALYSIS]</scope>
</reference>
<reference key="14">
    <citation type="journal article" date="2015" name="Cell Rep.">
        <title>SUMO-2 orchestrates chromatin modifiers in response to DNA damage.</title>
        <authorList>
            <person name="Hendriks I.A."/>
            <person name="Treffers L.W."/>
            <person name="Verlaan-de Vries M."/>
            <person name="Olsen J.V."/>
            <person name="Vertegaal A.C."/>
        </authorList>
    </citation>
    <scope>SUMOYLATION [LARGE SCALE ANALYSIS] AT LYS-271 AND LYS-1946</scope>
    <scope>IDENTIFICATION BY MASS SPECTROMETRY [LARGE SCALE ANALYSIS]</scope>
</reference>
<reference key="15">
    <citation type="journal article" date="2015" name="Mol. Cell. Proteomics">
        <title>System-wide analysis of SUMOylation dynamics in response to replication stress reveals novel small ubiquitin-like modified target proteins and acceptor lysines relevant for genome stability.</title>
        <authorList>
            <person name="Xiao Z."/>
            <person name="Chang J.G."/>
            <person name="Hendriks I.A."/>
            <person name="Sigurdsson J.O."/>
            <person name="Olsen J.V."/>
            <person name="Vertegaal A.C."/>
        </authorList>
    </citation>
    <scope>SUMOYLATION [LARGE SCALE ANALYSIS] AT LYS-20</scope>
    <scope>SUMOYLATION [LARGE SCALE ANALYSIS] AT LYS-849 (ISOFORM 2)</scope>
    <scope>IDENTIFICATION BY MASS SPECTROMETRY [LARGE SCALE ANALYSIS]</scope>
</reference>
<reference key="16">
    <citation type="journal article" date="2017" name="Nat. Struct. Mol. Biol.">
        <title>Site-specific mapping of the human SUMO proteome reveals co-modification with phosphorylation.</title>
        <authorList>
            <person name="Hendriks I.A."/>
            <person name="Lyon D."/>
            <person name="Young C."/>
            <person name="Jensen L.J."/>
            <person name="Vertegaal A.C."/>
            <person name="Nielsen M.L."/>
        </authorList>
    </citation>
    <scope>SUMOYLATION [LARGE SCALE ANALYSIS] AT LYS-20; LYS-234; LYS-271; LYS-337; LYS-347; LYS-349; LYS-428; LYS-484; LYS-631; LYS-657; LYS-668; LYS-706; LYS-986; LYS-1135; LYS-1206; LYS-1214; LYS-1220; LYS-1243; LYS-1499; LYS-1571; LYS-1591; LYS-1698; LYS-1780; LYS-1946; LYS-2104; LYS-2293; LYS-2444 AND LYS-2504</scope>
    <scope>SUMOYLATION [LARGE SCALE ANALYSIS] AT LYS-849 (ISOFORM 2)</scope>
    <scope>IDENTIFICATION BY MASS SPECTROMETRY [LARGE SCALE ANALYSIS]</scope>
</reference>
<reference key="17">
    <citation type="submission" date="2005-11" db="PDB data bank">
        <title>Solution structures of the C2H2 type zinc finger domain of human zinc finger protein 462.</title>
        <authorList>
            <consortium name="RIKEN structural genomics initiative (RSGI)"/>
        </authorList>
    </citation>
    <scope>STRUCTURE BY NMR OF 1874-1948</scope>
</reference>
<reference key="18">
    <citation type="journal article" date="2017" name="Eur. J. Hum. Genet.">
        <title>Haploinsufficiency of ZNF462 is associated with craniofacial anomalies, corpus callosum dysgenesis, ptosis, and developmental delay.</title>
        <authorList>
            <person name="Weiss K."/>
            <person name="Wigby K."/>
            <person name="Fannemel M."/>
            <person name="Henderson L.B."/>
            <person name="Beck N."/>
            <person name="Ghali N."/>
            <person name="Study D.D.D."/>
            <person name="Anderlid B.M."/>
            <person name="Lundin J."/>
            <person name="Hamosh A."/>
            <person name="Jones M.C."/>
            <person name="Ghedia S."/>
            <person name="Muenke M."/>
            <person name="Kruszka P."/>
        </authorList>
    </citation>
    <scope>INVOLVEMENT IN WSKA</scope>
    <scope>VARIANT WSKA 1263-ARG--GLU-2506 DEL</scope>
</reference>
<reference key="19">
    <citation type="journal article" date="2018" name="Eur. J. Med. Genet.">
        <title>ZNF462 and KLF12 are disrupted by a de novo translocation in a patient with syndromic intellectual disability and autism spectrum disorder.</title>
        <authorList>
            <person name="Cosemans N."/>
            <person name="Vandenhove L."/>
            <person name="Maljaars J."/>
            <person name="Van Esch H."/>
            <person name="Devriendt K."/>
            <person name="Baldwin A."/>
            <person name="Fryns J.P."/>
            <person name="Noens I."/>
            <person name="Peeters H."/>
        </authorList>
    </citation>
    <scope>INVOLVEMENT IN WSKA</scope>
</reference>
<reference key="20">
    <citation type="journal article" date="2019" name="Am. J. Med. Genet. A">
        <title>Phenotype delineation of ZNF462 related syndrome.</title>
        <authorList>
            <person name="Kruszka P."/>
            <person name="Hu T."/>
            <person name="Hong S."/>
            <person name="Signer R."/>
            <person name="Cogne B."/>
            <person name="Isidor B."/>
            <person name="Mazzola S.E."/>
            <person name="Giltay J.C."/>
            <person name="van Gassen K.L.I."/>
            <person name="England E.M."/>
            <person name="Pais L."/>
            <person name="Ockeloen C.W."/>
            <person name="Sanchez-Lara P.A."/>
            <person name="Kinning E."/>
            <person name="Adams D.J."/>
            <person name="Treat K."/>
            <person name="Torres-Martinez W."/>
            <person name="Bedeschi M.F."/>
            <person name="Iascone M."/>
            <person name="Blaney S."/>
            <person name="Bell O."/>
            <person name="Tan T.Y."/>
            <person name="Delrue M.A."/>
            <person name="Jurgens J."/>
            <person name="Barry B.J."/>
            <person name="Engle E.C."/>
            <person name="Savage S.K."/>
            <person name="Fleischer N."/>
            <person name="Martinez-Agosto J.A."/>
            <person name="Boycott K."/>
            <person name="Zackai E.H."/>
            <person name="Muenke M."/>
        </authorList>
    </citation>
    <scope>INVOLVEMENT IN WSKA</scope>
    <scope>VARIANTS WSKA 255-ARG--GLU-2506 DEL; 412-SER--GLU-2506 DEL; 864-ARG--GLU-2506 DEL; 899-GLU--GLU-2506 DEL; 1389-GLN--GLU-2506 DEL AND 2265-TYR--GLU-2506 DEL</scope>
</reference>
<feature type="chain" id="PRO_0000047601" description="Zinc finger protein 462">
    <location>
        <begin position="1"/>
        <end position="2506"/>
    </location>
</feature>
<feature type="zinc finger region" description="C2H2-type 1" evidence="2">
    <location>
        <begin position="4"/>
        <end position="27"/>
    </location>
</feature>
<feature type="zinc finger region" description="C2H2-type 2" evidence="2">
    <location>
        <begin position="108"/>
        <end position="131"/>
    </location>
</feature>
<feature type="zinc finger region" description="C2H2-type 3" evidence="2">
    <location>
        <begin position="162"/>
        <end position="185"/>
    </location>
</feature>
<feature type="zinc finger region" description="C2H2-type 4" evidence="2">
    <location>
        <begin position="439"/>
        <end position="462"/>
    </location>
</feature>
<feature type="zinc finger region" description="C2H2-type 5" evidence="2">
    <location>
        <begin position="470"/>
        <end position="492"/>
    </location>
</feature>
<feature type="zinc finger region" description="C2H2-type 6" evidence="2">
    <location>
        <begin position="600"/>
        <end position="623"/>
    </location>
</feature>
<feature type="zinc finger region" description="C2H2-type 7" evidence="2">
    <location>
        <begin position="843"/>
        <end position="866"/>
    </location>
</feature>
<feature type="zinc finger region" description="C2H2-type 8" evidence="2">
    <location>
        <begin position="886"/>
        <end position="908"/>
    </location>
</feature>
<feature type="zinc finger region" description="C2H2-type 9" evidence="2">
    <location>
        <begin position="925"/>
        <end position="948"/>
    </location>
</feature>
<feature type="zinc finger region" description="C2H2-type 10" evidence="2">
    <location>
        <begin position="1030"/>
        <end position="1053"/>
    </location>
</feature>
<feature type="zinc finger region" description="C2H2-type 11" evidence="2">
    <location>
        <begin position="1265"/>
        <end position="1288"/>
    </location>
</feature>
<feature type="zinc finger region" description="C2H2-type 12" evidence="2">
    <location>
        <begin position="1470"/>
        <end position="1493"/>
    </location>
</feature>
<feature type="zinc finger region" description="C2H2-type 13" evidence="2">
    <location>
        <begin position="1515"/>
        <end position="1538"/>
    </location>
</feature>
<feature type="zinc finger region" description="C2H2-type 14" evidence="2">
    <location>
        <begin position="1577"/>
        <end position="1600"/>
    </location>
</feature>
<feature type="zinc finger region" description="C2H2-type 15" evidence="2">
    <location>
        <begin position="1660"/>
        <end position="1683"/>
    </location>
</feature>
<feature type="zinc finger region" description="C2H2-type 16" evidence="2">
    <location>
        <begin position="1697"/>
        <end position="1720"/>
    </location>
</feature>
<feature type="zinc finger region" description="C2H2-type 17" evidence="2">
    <location>
        <begin position="1892"/>
        <end position="1914"/>
    </location>
</feature>
<feature type="zinc finger region" description="C2H2-type 18; degenerate" evidence="2">
    <location>
        <begin position="1968"/>
        <end position="1992"/>
    </location>
</feature>
<feature type="zinc finger region" description="C2H2-type 19" evidence="2">
    <location>
        <begin position="2025"/>
        <end position="2048"/>
    </location>
</feature>
<feature type="zinc finger region" description="C2H2-type 20" evidence="2">
    <location>
        <begin position="2054"/>
        <end position="2077"/>
    </location>
</feature>
<feature type="zinc finger region" description="C2H2-type 21" evidence="2">
    <location>
        <begin position="2083"/>
        <end position="2106"/>
    </location>
</feature>
<feature type="zinc finger region" description="C2H2-type 22" evidence="2">
    <location>
        <begin position="2191"/>
        <end position="2214"/>
    </location>
</feature>
<feature type="zinc finger region" description="C2H2-type 23" evidence="2">
    <location>
        <begin position="2220"/>
        <end position="2243"/>
    </location>
</feature>
<feature type="zinc finger region" description="C2H2-type 24" evidence="2">
    <location>
        <begin position="2254"/>
        <end position="2276"/>
    </location>
</feature>
<feature type="zinc finger region" description="C2H2-type 25" evidence="2">
    <location>
        <begin position="2300"/>
        <end position="2322"/>
    </location>
</feature>
<feature type="zinc finger region" description="C2H2-type 26" evidence="2">
    <location>
        <begin position="2328"/>
        <end position="2351"/>
    </location>
</feature>
<feature type="zinc finger region" description="C2H2-type 27" evidence="2">
    <location>
        <begin position="2414"/>
        <end position="2436"/>
    </location>
</feature>
<feature type="region of interest" description="Interaction with PBX1" evidence="1">
    <location>
        <begin position="215"/>
        <end position="241"/>
    </location>
</feature>
<feature type="region of interest" description="Disordered" evidence="3">
    <location>
        <begin position="280"/>
        <end position="299"/>
    </location>
</feature>
<feature type="region of interest" description="Disordered" evidence="3">
    <location>
        <begin position="337"/>
        <end position="356"/>
    </location>
</feature>
<feature type="region of interest" description="Disordered" evidence="3">
    <location>
        <begin position="535"/>
        <end position="596"/>
    </location>
</feature>
<feature type="region of interest" description="Disordered" evidence="3">
    <location>
        <begin position="636"/>
        <end position="661"/>
    </location>
</feature>
<feature type="region of interest" description="Disordered" evidence="3">
    <location>
        <begin position="1157"/>
        <end position="1186"/>
    </location>
</feature>
<feature type="region of interest" description="Disordered" evidence="3">
    <location>
        <begin position="2122"/>
        <end position="2152"/>
    </location>
</feature>
<feature type="region of interest" description="Disordered" evidence="3">
    <location>
        <begin position="2371"/>
        <end position="2396"/>
    </location>
</feature>
<feature type="compositionally biased region" description="Pro residues" evidence="3">
    <location>
        <begin position="542"/>
        <end position="593"/>
    </location>
</feature>
<feature type="compositionally biased region" description="Polar residues" evidence="3">
    <location>
        <begin position="648"/>
        <end position="661"/>
    </location>
</feature>
<feature type="compositionally biased region" description="Polar residues" evidence="3">
    <location>
        <begin position="2143"/>
        <end position="2152"/>
    </location>
</feature>
<feature type="modified residue" description="Phosphoserine" evidence="15">
    <location>
        <position position="350"/>
    </location>
</feature>
<feature type="modified residue" description="Phosphoserine" evidence="15">
    <location>
        <position position="354"/>
    </location>
</feature>
<feature type="modified residue" description="Phosphoserine" evidence="14 15">
    <location>
        <position position="688"/>
    </location>
</feature>
<feature type="modified residue" description="Phosphoserine" evidence="15">
    <location>
        <position position="1090"/>
    </location>
</feature>
<feature type="modified residue" description="Phosphoserine" evidence="15">
    <location>
        <position position="1166"/>
    </location>
</feature>
<feature type="modified residue" description="N6-methyllysine" evidence="16">
    <location>
        <position position="2004"/>
    </location>
</feature>
<feature type="modified residue" description="Phosphoserine" evidence="15">
    <location>
        <position position="2172"/>
    </location>
</feature>
<feature type="modified residue" description="Phosphoserine" evidence="15">
    <location>
        <position position="2177"/>
    </location>
</feature>
<feature type="glycosylation site" description="O-linked (GlcNAc6P) serine" evidence="6">
    <location>
        <position position="292"/>
    </location>
</feature>
<feature type="glycosylation site" description="O-linked (GlcNAc6P) serine" evidence="6">
    <location>
        <position position="309"/>
    </location>
</feature>
<feature type="cross-link" description="Glycyl lysine isopeptide (Lys-Gly) (interchain with G-Cter in SUMO1); alternate" evidence="17">
    <location>
        <position position="20"/>
    </location>
</feature>
<feature type="cross-link" description="Glycyl lysine isopeptide (Lys-Gly) (interchain with G-Cter in SUMO2); alternate" evidence="18 19 21">
    <location>
        <position position="20"/>
    </location>
</feature>
<feature type="cross-link" description="Glycyl lysine isopeptide (Lys-Gly) (interchain with G-Cter in SUMO2)" evidence="21">
    <location>
        <position position="234"/>
    </location>
</feature>
<feature type="cross-link" description="Glycyl lysine isopeptide (Lys-Gly) (interchain with G-Cter in SUMO2)" evidence="20 21">
    <location>
        <position position="271"/>
    </location>
</feature>
<feature type="cross-link" description="Glycyl lysine isopeptide (Lys-Gly) (interchain with G-Cter in SUMO2)" evidence="21">
    <location>
        <position position="337"/>
    </location>
</feature>
<feature type="cross-link" description="Glycyl lysine isopeptide (Lys-Gly) (interchain with G-Cter in SUMO2)" evidence="21">
    <location>
        <position position="347"/>
    </location>
</feature>
<feature type="cross-link" description="Glycyl lysine isopeptide (Lys-Gly) (interchain with G-Cter in SUMO2)" evidence="21">
    <location>
        <position position="349"/>
    </location>
</feature>
<feature type="cross-link" description="Glycyl lysine isopeptide (Lys-Gly) (interchain with G-Cter in SUMO2)" evidence="21">
    <location>
        <position position="428"/>
    </location>
</feature>
<feature type="cross-link" description="Glycyl lysine isopeptide (Lys-Gly) (interchain with G-Cter in SUMO2)" evidence="21">
    <location>
        <position position="484"/>
    </location>
</feature>
<feature type="cross-link" description="Glycyl lysine isopeptide (Lys-Gly) (interchain with G-Cter in SUMO2)" evidence="21">
    <location>
        <position position="631"/>
    </location>
</feature>
<feature type="cross-link" description="Glycyl lysine isopeptide (Lys-Gly) (interchain with G-Cter in SUMO2)" evidence="21">
    <location>
        <position position="657"/>
    </location>
</feature>
<feature type="cross-link" description="Glycyl lysine isopeptide (Lys-Gly) (interchain with G-Cter in SUMO2)" evidence="21">
    <location>
        <position position="668"/>
    </location>
</feature>
<feature type="cross-link" description="Glycyl lysine isopeptide (Lys-Gly) (interchain with G-Cter in SUMO2)" evidence="21">
    <location>
        <position position="706"/>
    </location>
</feature>
<feature type="cross-link" description="Glycyl lysine isopeptide (Lys-Gly) (interchain with G-Cter in SUMO2)" evidence="21">
    <location>
        <position position="986"/>
    </location>
</feature>
<feature type="cross-link" description="Glycyl lysine isopeptide (Lys-Gly) (interchain with G-Cter in SUMO2)" evidence="21">
    <location>
        <position position="1135"/>
    </location>
</feature>
<feature type="cross-link" description="Glycyl lysine isopeptide (Lys-Gly) (interchain with G-Cter in SUMO2)" evidence="21">
    <location>
        <position position="1206"/>
    </location>
</feature>
<feature type="cross-link" description="Glycyl lysine isopeptide (Lys-Gly) (interchain with G-Cter in SUMO2)" evidence="21">
    <location>
        <position position="1214"/>
    </location>
</feature>
<feature type="cross-link" description="Glycyl lysine isopeptide (Lys-Gly) (interchain with G-Cter in SUMO2)" evidence="21">
    <location>
        <position position="1220"/>
    </location>
</feature>
<feature type="cross-link" description="Glycyl lysine isopeptide (Lys-Gly) (interchain with G-Cter in SUMO2)" evidence="21">
    <location>
        <position position="1243"/>
    </location>
</feature>
<feature type="cross-link" description="Glycyl lysine isopeptide (Lys-Gly) (interchain with G-Cter in SUMO2)" evidence="21">
    <location>
        <position position="1499"/>
    </location>
</feature>
<feature type="cross-link" description="Glycyl lysine isopeptide (Lys-Gly) (interchain with G-Cter in SUMO2)" evidence="21">
    <location>
        <position position="1571"/>
    </location>
</feature>
<feature type="cross-link" description="Glycyl lysine isopeptide (Lys-Gly) (interchain with G-Cter in SUMO2)" evidence="21">
    <location>
        <position position="1591"/>
    </location>
</feature>
<feature type="cross-link" description="Glycyl lysine isopeptide (Lys-Gly) (interchain with G-Cter in SUMO2)" evidence="21">
    <location>
        <position position="1698"/>
    </location>
</feature>
<feature type="cross-link" description="Glycyl lysine isopeptide (Lys-Gly) (interchain with G-Cter in SUMO2)" evidence="21">
    <location>
        <position position="1780"/>
    </location>
</feature>
<feature type="cross-link" description="Glycyl lysine isopeptide (Lys-Gly) (interchain with G-Cter in SUMO2)" evidence="18 20 21">
    <location>
        <position position="1946"/>
    </location>
</feature>
<feature type="cross-link" description="Glycyl lysine isopeptide (Lys-Gly) (interchain with G-Cter in SUMO2)" evidence="21">
    <location>
        <position position="2104"/>
    </location>
</feature>
<feature type="cross-link" description="Glycyl lysine isopeptide (Lys-Gly) (interchain with G-Cter in SUMO2)" evidence="21">
    <location>
        <position position="2293"/>
    </location>
</feature>
<feature type="cross-link" description="Glycyl lysine isopeptide (Lys-Gly) (interchain with G-Cter in SUMO2)" evidence="21">
    <location>
        <position position="2444"/>
    </location>
</feature>
<feature type="cross-link" description="Glycyl lysine isopeptide (Lys-Gly) (interchain with G-Cter in SUMO2)" evidence="21">
    <location>
        <position position="2504"/>
    </location>
</feature>
<feature type="splice variant" id="VSP_037407" description="In isoform 2." evidence="10">
    <location>
        <begin position="1"/>
        <end position="1155"/>
    </location>
</feature>
<feature type="splice variant" id="VSP_037408" description="In isoform 2." evidence="10">
    <original>K</original>
    <variation>KQEADDPAHLFLDGLEAAKDASGALVGRVDGEHCLLDGMLEDETRPGGYHCSQCDRVLMSMQ</variation>
    <location>
        <position position="2004"/>
    </location>
</feature>
<feature type="splice variant" id="VSP_037409" description="In isoform 3." evidence="11">
    <original>K</original>
    <variation>KEADDPAHLFLDGLEAAKDASGALVGRVDGEHCLLDGMLEDETRPGGYHCSQCDRVLMSMQ</variation>
    <location>
        <position position="2004"/>
    </location>
</feature>
<feature type="sequence variant" id="VAR_083319" description="In WSKA." evidence="9">
    <location>
        <begin position="255"/>
        <end position="2506"/>
    </location>
</feature>
<feature type="sequence variant" id="VAR_058301" description="In dbSNP:rs17723637.">
    <original>M</original>
    <variation>V</variation>
    <location>
        <position position="404"/>
    </location>
</feature>
<feature type="sequence variant" id="VAR_083320" description="In WSKA." evidence="9">
    <location>
        <begin position="412"/>
        <end position="2506"/>
    </location>
</feature>
<feature type="sequence variant" id="VAR_083321" description="In WSKA." evidence="9">
    <location>
        <begin position="864"/>
        <end position="2506"/>
    </location>
</feature>
<feature type="sequence variant" id="VAR_083322" description="In WSKA." evidence="9">
    <location>
        <begin position="899"/>
        <end position="2506"/>
    </location>
</feature>
<feature type="sequence variant" id="VAR_058302" description="In dbSNP:rs3814541.">
    <original>P</original>
    <variation>S</variation>
    <location>
        <position position="1187"/>
    </location>
</feature>
<feature type="sequence variant" id="VAR_083323" description="In WSKA." evidence="7">
    <location>
        <begin position="1263"/>
        <end position="2506"/>
    </location>
</feature>
<feature type="sequence variant" id="VAR_083324" description="In WSKA." evidence="9">
    <location>
        <begin position="1389"/>
        <end position="2506"/>
    </location>
</feature>
<feature type="sequence variant" id="VAR_058303" description="In dbSNP:rs3814538.">
    <original>N</original>
    <variation>S</variation>
    <location>
        <position position="1828"/>
    </location>
</feature>
<feature type="sequence variant" id="VAR_058304" description="In dbSNP:rs7020769.">
    <original>K</original>
    <variation>R</variation>
    <location>
        <position position="2052"/>
    </location>
</feature>
<feature type="sequence variant" id="VAR_083325" description="In WSKA." evidence="9">
    <location>
        <begin position="2265"/>
        <end position="2506"/>
    </location>
</feature>
<feature type="sequence variant" id="VAR_058305" description="In dbSNP:rs10217192.">
    <original>H</original>
    <variation>L</variation>
    <location>
        <position position="2452"/>
    </location>
</feature>
<feature type="sequence conflict" description="In Ref. 4; AK027866." evidence="12" ref="4">
    <original>Q</original>
    <variation>R</variation>
    <location>
        <position position="1241"/>
    </location>
</feature>
<feature type="sequence conflict" description="In Ref. 4; AK027866." evidence="12" ref="4">
    <original>V</original>
    <variation>I</variation>
    <location>
        <position position="1250"/>
    </location>
</feature>
<feature type="sequence conflict" description="In Ref. 4; AK027866." evidence="12" ref="4">
    <original>Q</original>
    <variation>R</variation>
    <location>
        <position position="1332"/>
    </location>
</feature>
<feature type="sequence conflict" description="In Ref. 4; AK027866." evidence="12" ref="4">
    <original>A</original>
    <variation>T</variation>
    <location>
        <position position="1424"/>
    </location>
</feature>
<feature type="sequence conflict" description="In Ref. 4; AK027866." evidence="12" ref="4">
    <original>E</original>
    <variation>A</variation>
    <location>
        <position position="1430"/>
    </location>
</feature>
<feature type="sequence conflict" description="In Ref. 4; AK027866." evidence="12" ref="4">
    <original>K</original>
    <variation>E</variation>
    <location>
        <position position="1936"/>
    </location>
</feature>
<feature type="sequence conflict" description="In Ref. 4; AK027866." evidence="12" ref="4">
    <original>C</original>
    <variation>S</variation>
    <location>
        <position position="2030"/>
    </location>
</feature>
<feature type="sequence conflict" description="In Ref. 4; AK027866." evidence="12" ref="4">
    <location>
        <position position="2277"/>
    </location>
</feature>
<feature type="strand" evidence="22">
    <location>
        <begin position="1895"/>
        <end position="1897"/>
    </location>
</feature>
<feature type="strand" evidence="22">
    <location>
        <begin position="1900"/>
        <end position="1903"/>
    </location>
</feature>
<feature type="helix" evidence="22">
    <location>
        <begin position="1904"/>
        <end position="1921"/>
    </location>
</feature>
<feature type="strand" evidence="22">
    <location>
        <begin position="1941"/>
        <end position="1943"/>
    </location>
</feature>
<feature type="cross-link" description="Glycyl lysine isopeptide (Lys-Gly) (interchain with G-Cter in SUMO2)" evidence="19 21">
    <location sequence="Q96JM2-2">
        <position position="849"/>
    </location>
</feature>
<gene>
    <name evidence="13" type="primary">ZNF462</name>
    <name type="synonym">KIAA1803</name>
</gene>
<protein>
    <recommendedName>
        <fullName evidence="12">Zinc finger protein 462</fullName>
    </recommendedName>
    <alternativeName>
        <fullName evidence="1">Zinc finger PBX1-interacting protein</fullName>
        <shortName evidence="1">ZFPIP</shortName>
    </alternativeName>
</protein>
<comment type="function">
    <text evidence="1 4 5">Zinc finger nuclear factor involved in transcription by regulating chromatin structure and organization (PubMed:20219459, PubMed:21570965). Involved in the pluripotency and differentiation of embryonic stem cells by regulating SOX2, POU5F1/OCT4, and NANOG (PubMed:21570965). By binding PBX1, prevents the heterodimerization of PBX1 and HOXA9 and their binding to DNA (By similarity). Regulates neuronal development and neural cell differentiation (PubMed:21570965).</text>
</comment>
<comment type="subunit">
    <text evidence="1">Interacts with PBX1; this interaction prevents PBX1-HOXA9 heterodimer from forming and binding to DNA.</text>
</comment>
<comment type="interaction">
    <interactant intactId="EBI-1210359">
        <id>Q96JM2</id>
    </interactant>
    <interactant intactId="EBI-744366">
        <id>Q96KQ7</id>
        <label>EHMT2</label>
    </interactant>
    <organismsDiffer>false</organismsDiffer>
    <experiments>5</experiments>
</comment>
<comment type="subcellular location">
    <subcellularLocation>
        <location evidence="4 5">Nucleus</location>
    </subcellularLocation>
</comment>
<comment type="alternative products">
    <event type="alternative splicing"/>
    <isoform>
        <id>Q96JM2-1</id>
        <name>1</name>
        <sequence type="displayed"/>
    </isoform>
    <isoform>
        <id>Q96JM2-2</id>
        <name>2</name>
        <sequence type="described" ref="VSP_037407 VSP_037408"/>
    </isoform>
    <isoform>
        <id>Q96JM2-3</id>
        <name>3</name>
        <sequence type="described" ref="VSP_037409"/>
    </isoform>
</comment>
<comment type="PTM">
    <text evidence="6">O-GlcNAcylated with O-GlcNAc-6-phosphate.</text>
</comment>
<comment type="disease" evidence="7 8 9">
    <disease id="DI-05675">
        <name>Weiss-Kruszka syndrome</name>
        <acronym>WSKA</acronym>
        <description>An autosomal dominant, multiple congenital anomaly syndrome with variable expressivity and complete penetrance. Patients manifest developmental delay, hypotonia, feeding difficulties, craniofacial abnormalities including ptosis, abnormal head shape, downslanting palpebral fissures, metopic ridging, and craniosynostosis. Variable congenital heart defects can be observed in some patients. A few patients show agenesis of the corpus callosum on brain imaging.</description>
        <dbReference type="MIM" id="618619"/>
    </disease>
    <text>The disease is caused by variants affecting the gene represented in this entry.</text>
</comment>
<comment type="sequence caution" evidence="12">
    <conflict type="erroneous initiation">
        <sequence resource="EMBL-CDS" id="AAH36884"/>
    </conflict>
    <text>Truncated N-terminus.</text>
</comment>